<keyword id="KW-0012">Acyltransferase</keyword>
<keyword id="KW-0963">Cytoplasm</keyword>
<keyword id="KW-0408">Iron</keyword>
<keyword id="KW-0479">Metal-binding</keyword>
<keyword id="KW-0808">Transferase</keyword>
<keyword id="KW-0819">tRNA processing</keyword>
<feature type="chain" id="PRO_1000024444" description="tRNA N6-adenosine threonylcarbamoyltransferase">
    <location>
        <begin position="1"/>
        <end position="386"/>
    </location>
</feature>
<feature type="binding site" evidence="1">
    <location>
        <position position="112"/>
    </location>
    <ligand>
        <name>Fe cation</name>
        <dbReference type="ChEBI" id="CHEBI:24875"/>
    </ligand>
</feature>
<feature type="binding site" evidence="1">
    <location>
        <position position="116"/>
    </location>
    <ligand>
        <name>Fe cation</name>
        <dbReference type="ChEBI" id="CHEBI:24875"/>
    </ligand>
</feature>
<feature type="binding site" evidence="1">
    <location>
        <begin position="134"/>
        <end position="138"/>
    </location>
    <ligand>
        <name>substrate</name>
    </ligand>
</feature>
<feature type="binding site" evidence="1">
    <location>
        <position position="167"/>
    </location>
    <ligand>
        <name>substrate</name>
    </ligand>
</feature>
<feature type="binding site" evidence="1">
    <location>
        <position position="180"/>
    </location>
    <ligand>
        <name>substrate</name>
    </ligand>
</feature>
<feature type="binding site" evidence="1">
    <location>
        <position position="322"/>
    </location>
    <ligand>
        <name>substrate</name>
    </ligand>
</feature>
<feature type="binding site" evidence="1">
    <location>
        <position position="350"/>
    </location>
    <ligand>
        <name>Fe cation</name>
        <dbReference type="ChEBI" id="CHEBI:24875"/>
    </ligand>
</feature>
<name>TSAD_RICAH</name>
<sequence>MIKILGIESSCDDTAVSIITENREILSNIIISQNTEHAVFGGVVPEIAARSHLSNLDKALTNVLKESNTKLIEISAIAATSGPGLIGGVIVGSMFARSLSSTLKKPFIAINHLEGHALTARLTDNIPYPYLLLLASGGHCQFVAVLGLGKYKILGSTIDDAVGETFDKVAKMLNLAFPGGPEIEQKAKLGDPHKYKFPKPIINSGNCNMSFSGLKTAVRTLIMNLQEINYNECNHLESVRQDEVQEEFAQRTKVHEHRRKLQNSLVSSFLNDSVINDIAASFQFTIGEILSSKVQDAIRAYEQITNNFDKKNIIIAGGVAANKYLQEILSNCAKTYGYQLIYPPIHLCTDNAAMIAYAGLERYNNKLFTPLNFCPKARWSLEDISK</sequence>
<reference key="1">
    <citation type="submission" date="2007-09" db="EMBL/GenBank/DDBJ databases">
        <title>Complete genome sequence of Rickettsia akari.</title>
        <authorList>
            <person name="Madan A."/>
            <person name="Fahey J."/>
            <person name="Helton E."/>
            <person name="Ketteman M."/>
            <person name="Madan A."/>
            <person name="Rodrigues S."/>
            <person name="Sanchez A."/>
            <person name="Whiting M."/>
            <person name="Dasch G."/>
            <person name="Eremeeva M."/>
        </authorList>
    </citation>
    <scope>NUCLEOTIDE SEQUENCE [LARGE SCALE GENOMIC DNA]</scope>
    <source>
        <strain>Hartford</strain>
    </source>
</reference>
<gene>
    <name evidence="1" type="primary">tsaD</name>
    <name type="synonym">gcp</name>
    <name type="ordered locus">A1C_00705</name>
</gene>
<accession>A8GM49</accession>
<protein>
    <recommendedName>
        <fullName evidence="1">tRNA N6-adenosine threonylcarbamoyltransferase</fullName>
        <ecNumber evidence="1">2.3.1.234</ecNumber>
    </recommendedName>
    <alternativeName>
        <fullName evidence="1">N6-L-threonylcarbamoyladenine synthase</fullName>
        <shortName evidence="1">t(6)A synthase</shortName>
    </alternativeName>
    <alternativeName>
        <fullName evidence="1">t(6)A37 threonylcarbamoyladenosine biosynthesis protein TsaD</fullName>
    </alternativeName>
    <alternativeName>
        <fullName evidence="1">tRNA threonylcarbamoyladenosine biosynthesis protein TsaD</fullName>
    </alternativeName>
</protein>
<dbReference type="EC" id="2.3.1.234" evidence="1"/>
<dbReference type="EMBL" id="CP000847">
    <property type="protein sequence ID" value="ABV74474.1"/>
    <property type="molecule type" value="Genomic_DNA"/>
</dbReference>
<dbReference type="RefSeq" id="WP_012013344.1">
    <property type="nucleotide sequence ID" value="NC_009881.1"/>
</dbReference>
<dbReference type="SMR" id="A8GM49"/>
<dbReference type="STRING" id="293614.A1C_00705"/>
<dbReference type="KEGG" id="rak:A1C_00705"/>
<dbReference type="eggNOG" id="COG0533">
    <property type="taxonomic scope" value="Bacteria"/>
</dbReference>
<dbReference type="HOGENOM" id="CLU_023208_0_2_5"/>
<dbReference type="Proteomes" id="UP000006830">
    <property type="component" value="Chromosome"/>
</dbReference>
<dbReference type="GO" id="GO:0005737">
    <property type="term" value="C:cytoplasm"/>
    <property type="evidence" value="ECO:0007669"/>
    <property type="project" value="UniProtKB-SubCell"/>
</dbReference>
<dbReference type="GO" id="GO:0005506">
    <property type="term" value="F:iron ion binding"/>
    <property type="evidence" value="ECO:0007669"/>
    <property type="project" value="UniProtKB-UniRule"/>
</dbReference>
<dbReference type="GO" id="GO:0061711">
    <property type="term" value="F:N(6)-L-threonylcarbamoyladenine synthase activity"/>
    <property type="evidence" value="ECO:0007669"/>
    <property type="project" value="UniProtKB-EC"/>
</dbReference>
<dbReference type="GO" id="GO:0002949">
    <property type="term" value="P:tRNA threonylcarbamoyladenosine modification"/>
    <property type="evidence" value="ECO:0007669"/>
    <property type="project" value="UniProtKB-UniRule"/>
</dbReference>
<dbReference type="CDD" id="cd24133">
    <property type="entry name" value="ASKHA_NBD_TsaD_bac"/>
    <property type="match status" value="1"/>
</dbReference>
<dbReference type="FunFam" id="3.30.420.40:FF:000012">
    <property type="entry name" value="tRNA N6-adenosine threonylcarbamoyltransferase"/>
    <property type="match status" value="1"/>
</dbReference>
<dbReference type="Gene3D" id="3.30.420.40">
    <property type="match status" value="2"/>
</dbReference>
<dbReference type="HAMAP" id="MF_01445">
    <property type="entry name" value="TsaD"/>
    <property type="match status" value="1"/>
</dbReference>
<dbReference type="InterPro" id="IPR043129">
    <property type="entry name" value="ATPase_NBD"/>
</dbReference>
<dbReference type="InterPro" id="IPR000905">
    <property type="entry name" value="Gcp-like_dom"/>
</dbReference>
<dbReference type="InterPro" id="IPR017861">
    <property type="entry name" value="KAE1/TsaD"/>
</dbReference>
<dbReference type="InterPro" id="IPR017860">
    <property type="entry name" value="Peptidase_M22_CS"/>
</dbReference>
<dbReference type="InterPro" id="IPR022437">
    <property type="entry name" value="RPE3"/>
</dbReference>
<dbReference type="InterPro" id="IPR022450">
    <property type="entry name" value="TsaD"/>
</dbReference>
<dbReference type="NCBIfam" id="TIGR00329">
    <property type="entry name" value="gcp_kae1"/>
    <property type="match status" value="1"/>
</dbReference>
<dbReference type="NCBIfam" id="TIGR03775">
    <property type="entry name" value="RPE3"/>
    <property type="match status" value="1"/>
</dbReference>
<dbReference type="NCBIfam" id="TIGR03723">
    <property type="entry name" value="T6A_TsaD_YgjD"/>
    <property type="match status" value="1"/>
</dbReference>
<dbReference type="PANTHER" id="PTHR11735">
    <property type="entry name" value="TRNA N6-ADENOSINE THREONYLCARBAMOYLTRANSFERASE"/>
    <property type="match status" value="1"/>
</dbReference>
<dbReference type="PANTHER" id="PTHR11735:SF6">
    <property type="entry name" value="TRNA N6-ADENOSINE THREONYLCARBAMOYLTRANSFERASE, MITOCHONDRIAL"/>
    <property type="match status" value="1"/>
</dbReference>
<dbReference type="Pfam" id="PF00814">
    <property type="entry name" value="TsaD"/>
    <property type="match status" value="1"/>
</dbReference>
<dbReference type="PRINTS" id="PR00789">
    <property type="entry name" value="OSIALOPTASE"/>
</dbReference>
<dbReference type="SUPFAM" id="SSF53067">
    <property type="entry name" value="Actin-like ATPase domain"/>
    <property type="match status" value="2"/>
</dbReference>
<dbReference type="PROSITE" id="PS01016">
    <property type="entry name" value="GLYCOPROTEASE"/>
    <property type="match status" value="1"/>
</dbReference>
<organism>
    <name type="scientific">Rickettsia akari (strain Hartford)</name>
    <dbReference type="NCBI Taxonomy" id="293614"/>
    <lineage>
        <taxon>Bacteria</taxon>
        <taxon>Pseudomonadati</taxon>
        <taxon>Pseudomonadota</taxon>
        <taxon>Alphaproteobacteria</taxon>
        <taxon>Rickettsiales</taxon>
        <taxon>Rickettsiaceae</taxon>
        <taxon>Rickettsieae</taxon>
        <taxon>Rickettsia</taxon>
        <taxon>spotted fever group</taxon>
    </lineage>
</organism>
<comment type="function">
    <text evidence="1">Required for the formation of a threonylcarbamoyl group on adenosine at position 37 (t(6)A37) in tRNAs that read codons beginning with adenine. Is involved in the transfer of the threonylcarbamoyl moiety of threonylcarbamoyl-AMP (TC-AMP) to the N6 group of A37, together with TsaE and TsaB. TsaD likely plays a direct catalytic role in this reaction.</text>
</comment>
<comment type="catalytic activity">
    <reaction evidence="1">
        <text>L-threonylcarbamoyladenylate + adenosine(37) in tRNA = N(6)-L-threonylcarbamoyladenosine(37) in tRNA + AMP + H(+)</text>
        <dbReference type="Rhea" id="RHEA:37059"/>
        <dbReference type="Rhea" id="RHEA-COMP:10162"/>
        <dbReference type="Rhea" id="RHEA-COMP:10163"/>
        <dbReference type="ChEBI" id="CHEBI:15378"/>
        <dbReference type="ChEBI" id="CHEBI:73682"/>
        <dbReference type="ChEBI" id="CHEBI:74411"/>
        <dbReference type="ChEBI" id="CHEBI:74418"/>
        <dbReference type="ChEBI" id="CHEBI:456215"/>
        <dbReference type="EC" id="2.3.1.234"/>
    </reaction>
</comment>
<comment type="cofactor">
    <cofactor evidence="1">
        <name>Fe(2+)</name>
        <dbReference type="ChEBI" id="CHEBI:29033"/>
    </cofactor>
    <text evidence="1">Binds 1 Fe(2+) ion per subunit.</text>
</comment>
<comment type="subcellular location">
    <subcellularLocation>
        <location evidence="1">Cytoplasm</location>
    </subcellularLocation>
</comment>
<comment type="similarity">
    <text evidence="1">Belongs to the KAE1 / TsaD family.</text>
</comment>
<proteinExistence type="inferred from homology"/>
<evidence type="ECO:0000255" key="1">
    <source>
        <dbReference type="HAMAP-Rule" id="MF_01445"/>
    </source>
</evidence>